<name>CSPLX_ARATH</name>
<protein>
    <recommendedName>
        <fullName>CASP-like protein 2D1</fullName>
        <shortName>AtCASPL2D1</shortName>
    </recommendedName>
</protein>
<organism>
    <name type="scientific">Arabidopsis thaliana</name>
    <name type="common">Mouse-ear cress</name>
    <dbReference type="NCBI Taxonomy" id="3702"/>
    <lineage>
        <taxon>Eukaryota</taxon>
        <taxon>Viridiplantae</taxon>
        <taxon>Streptophyta</taxon>
        <taxon>Embryophyta</taxon>
        <taxon>Tracheophyta</taxon>
        <taxon>Spermatophyta</taxon>
        <taxon>Magnoliopsida</taxon>
        <taxon>eudicotyledons</taxon>
        <taxon>Gunneridae</taxon>
        <taxon>Pentapetalae</taxon>
        <taxon>rosids</taxon>
        <taxon>malvids</taxon>
        <taxon>Brassicales</taxon>
        <taxon>Brassicaceae</taxon>
        <taxon>Camelineae</taxon>
        <taxon>Arabidopsis</taxon>
    </lineage>
</organism>
<proteinExistence type="evidence at transcript level"/>
<reference key="1">
    <citation type="journal article" date="1997" name="DNA Res.">
        <title>Structural analysis of Arabidopsis thaliana chromosome 5. I. Sequence features of the 1.6 Mb regions covered by twenty physically assigned P1 clones.</title>
        <authorList>
            <person name="Sato S."/>
            <person name="Kotani H."/>
            <person name="Nakamura Y."/>
            <person name="Kaneko T."/>
            <person name="Asamizu E."/>
            <person name="Fukami M."/>
            <person name="Miyajima N."/>
            <person name="Tabata S."/>
        </authorList>
    </citation>
    <scope>NUCLEOTIDE SEQUENCE [LARGE SCALE GENOMIC DNA]</scope>
    <source>
        <strain>cv. Columbia</strain>
    </source>
</reference>
<reference key="2">
    <citation type="journal article" date="2017" name="Plant J.">
        <title>Araport11: a complete reannotation of the Arabidopsis thaliana reference genome.</title>
        <authorList>
            <person name="Cheng C.Y."/>
            <person name="Krishnakumar V."/>
            <person name="Chan A.P."/>
            <person name="Thibaud-Nissen F."/>
            <person name="Schobel S."/>
            <person name="Town C.D."/>
        </authorList>
    </citation>
    <scope>GENOME REANNOTATION</scope>
    <source>
        <strain>cv. Columbia</strain>
    </source>
</reference>
<reference key="3">
    <citation type="journal article" date="2003" name="Science">
        <title>Empirical analysis of transcriptional activity in the Arabidopsis genome.</title>
        <authorList>
            <person name="Yamada K."/>
            <person name="Lim J."/>
            <person name="Dale J.M."/>
            <person name="Chen H."/>
            <person name="Shinn P."/>
            <person name="Palm C.J."/>
            <person name="Southwick A.M."/>
            <person name="Wu H.C."/>
            <person name="Kim C.J."/>
            <person name="Nguyen M."/>
            <person name="Pham P.K."/>
            <person name="Cheuk R.F."/>
            <person name="Karlin-Newmann G."/>
            <person name="Liu S.X."/>
            <person name="Lam B."/>
            <person name="Sakano H."/>
            <person name="Wu T."/>
            <person name="Yu G."/>
            <person name="Miranda M."/>
            <person name="Quach H.L."/>
            <person name="Tripp M."/>
            <person name="Chang C.H."/>
            <person name="Lee J.M."/>
            <person name="Toriumi M.J."/>
            <person name="Chan M.M."/>
            <person name="Tang C.C."/>
            <person name="Onodera C.S."/>
            <person name="Deng J.M."/>
            <person name="Akiyama K."/>
            <person name="Ansari Y."/>
            <person name="Arakawa T."/>
            <person name="Banh J."/>
            <person name="Banno F."/>
            <person name="Bowser L."/>
            <person name="Brooks S.Y."/>
            <person name="Carninci P."/>
            <person name="Chao Q."/>
            <person name="Choy N."/>
            <person name="Enju A."/>
            <person name="Goldsmith A.D."/>
            <person name="Gurjal M."/>
            <person name="Hansen N.F."/>
            <person name="Hayashizaki Y."/>
            <person name="Johnson-Hopson C."/>
            <person name="Hsuan V.W."/>
            <person name="Iida K."/>
            <person name="Karnes M."/>
            <person name="Khan S."/>
            <person name="Koesema E."/>
            <person name="Ishida J."/>
            <person name="Jiang P.X."/>
            <person name="Jones T."/>
            <person name="Kawai J."/>
            <person name="Kamiya A."/>
            <person name="Meyers C."/>
            <person name="Nakajima M."/>
            <person name="Narusaka M."/>
            <person name="Seki M."/>
            <person name="Sakurai T."/>
            <person name="Satou M."/>
            <person name="Tamse R."/>
            <person name="Vaysberg M."/>
            <person name="Wallender E.K."/>
            <person name="Wong C."/>
            <person name="Yamamura Y."/>
            <person name="Yuan S."/>
            <person name="Shinozaki K."/>
            <person name="Davis R.W."/>
            <person name="Theologis A."/>
            <person name="Ecker J.R."/>
        </authorList>
    </citation>
    <scope>NUCLEOTIDE SEQUENCE [LARGE SCALE MRNA]</scope>
    <source>
        <strain>cv. Columbia</strain>
    </source>
</reference>
<reference key="4">
    <citation type="journal article" date="2014" name="Plant Physiol.">
        <title>Functional and evolutionary analysis of the CASPARIAN STRIP MEMBRANE DOMAIN PROTEIN family.</title>
        <authorList>
            <person name="Roppolo D."/>
            <person name="Boeckmann B."/>
            <person name="Pfister A."/>
            <person name="Boutet E."/>
            <person name="Rubio M.C."/>
            <person name="Denervaud-Tendon V."/>
            <person name="Vermeer J.E."/>
            <person name="Gheyselinck J."/>
            <person name="Xenarios I."/>
            <person name="Geldner N."/>
        </authorList>
    </citation>
    <scope>SUBCELLULAR LOCATION</scope>
    <scope>GENE FAMILY</scope>
    <scope>NOMENCLATURE</scope>
</reference>
<feature type="chain" id="PRO_0000308688" description="CASP-like protein 2D1">
    <location>
        <begin position="1"/>
        <end position="194"/>
    </location>
</feature>
<feature type="topological domain" description="Cytoplasmic" evidence="2">
    <location>
        <begin position="1"/>
        <end position="30"/>
    </location>
</feature>
<feature type="transmembrane region" description="Helical" evidence="2">
    <location>
        <begin position="31"/>
        <end position="51"/>
    </location>
</feature>
<feature type="topological domain" description="Extracellular" evidence="2">
    <location>
        <begin position="52"/>
        <end position="74"/>
    </location>
</feature>
<feature type="transmembrane region" description="Helical" evidence="2">
    <location>
        <begin position="75"/>
        <end position="95"/>
    </location>
</feature>
<feature type="topological domain" description="Cytoplasmic" evidence="2">
    <location>
        <begin position="96"/>
        <end position="110"/>
    </location>
</feature>
<feature type="transmembrane region" description="Helical" evidence="2">
    <location>
        <begin position="111"/>
        <end position="133"/>
    </location>
</feature>
<feature type="topological domain" description="Extracellular" evidence="2">
    <location>
        <begin position="134"/>
        <end position="152"/>
    </location>
</feature>
<feature type="transmembrane region" description="Helical" evidence="2">
    <location>
        <begin position="153"/>
        <end position="173"/>
    </location>
</feature>
<feature type="topological domain" description="Cytoplasmic" evidence="2">
    <location>
        <begin position="174"/>
        <end position="194"/>
    </location>
</feature>
<feature type="region of interest" description="Disordered" evidence="3">
    <location>
        <begin position="1"/>
        <end position="26"/>
    </location>
</feature>
<feature type="compositionally biased region" description="Basic and acidic residues" evidence="3">
    <location>
        <begin position="1"/>
        <end position="16"/>
    </location>
</feature>
<sequence>MRDNNNNNTREEERSSSSKQQQPQAPMSLKIIDSCLRLSVVPLSVATIWLTVTNHESNPDYGNLEYNSIMGLKYMVGVSAISAIYALLSTVSSWVTCLVSKAWLFFIPDQVLAYVMTTSVAGATEIVYLLNKGDKIVTWSEMCSSYPHYCSKLTIALGLHVFVLFFFLFLSVISAYRAFSPFDPPCDSQTNNDA</sequence>
<keyword id="KW-1003">Cell membrane</keyword>
<keyword id="KW-0472">Membrane</keyword>
<keyword id="KW-1185">Reference proteome</keyword>
<keyword id="KW-0812">Transmembrane</keyword>
<keyword id="KW-1133">Transmembrane helix</keyword>
<dbReference type="EMBL" id="AB005232">
    <property type="protein sequence ID" value="BAB08777.1"/>
    <property type="molecule type" value="Genomic_DNA"/>
</dbReference>
<dbReference type="EMBL" id="CP002688">
    <property type="protein sequence ID" value="AED96565.1"/>
    <property type="molecule type" value="Genomic_DNA"/>
</dbReference>
<dbReference type="EMBL" id="BT002961">
    <property type="protein sequence ID" value="AAO22772.1"/>
    <property type="molecule type" value="mRNA"/>
</dbReference>
<dbReference type="EMBL" id="BT004438">
    <property type="protein sequence ID" value="AAO42432.1"/>
    <property type="molecule type" value="mRNA"/>
</dbReference>
<dbReference type="RefSeq" id="NP_200309.1">
    <property type="nucleotide sequence ID" value="NM_124880.3"/>
</dbReference>
<dbReference type="BioGRID" id="20833">
    <property type="interactions" value="1"/>
</dbReference>
<dbReference type="FunCoup" id="Q9FFT2">
    <property type="interactions" value="643"/>
</dbReference>
<dbReference type="IntAct" id="Q9FFT2">
    <property type="interactions" value="1"/>
</dbReference>
<dbReference type="PaxDb" id="3702-AT5G54980.1"/>
<dbReference type="ProteomicsDB" id="222690"/>
<dbReference type="EnsemblPlants" id="AT5G54980.1">
    <property type="protein sequence ID" value="AT5G54980.1"/>
    <property type="gene ID" value="AT5G54980"/>
</dbReference>
<dbReference type="GeneID" id="835589"/>
<dbReference type="Gramene" id="AT5G54980.1">
    <property type="protein sequence ID" value="AT5G54980.1"/>
    <property type="gene ID" value="AT5G54980"/>
</dbReference>
<dbReference type="KEGG" id="ath:AT5G54980"/>
<dbReference type="Araport" id="AT5G54980"/>
<dbReference type="TAIR" id="AT5G54980">
    <property type="gene designation" value="CASPL2D1"/>
</dbReference>
<dbReference type="eggNOG" id="ENOG502RY7Y">
    <property type="taxonomic scope" value="Eukaryota"/>
</dbReference>
<dbReference type="HOGENOM" id="CLU_066104_2_2_1"/>
<dbReference type="InParanoid" id="Q9FFT2"/>
<dbReference type="OMA" id="FSMFEPP"/>
<dbReference type="OrthoDB" id="755577at2759"/>
<dbReference type="PhylomeDB" id="Q9FFT2"/>
<dbReference type="PRO" id="PR:Q9FFT2"/>
<dbReference type="Proteomes" id="UP000006548">
    <property type="component" value="Chromosome 5"/>
</dbReference>
<dbReference type="ExpressionAtlas" id="Q9FFT2">
    <property type="expression patterns" value="baseline and differential"/>
</dbReference>
<dbReference type="GO" id="GO:0005886">
    <property type="term" value="C:plasma membrane"/>
    <property type="evidence" value="ECO:0000314"/>
    <property type="project" value="UniProtKB"/>
</dbReference>
<dbReference type="InterPro" id="IPR006459">
    <property type="entry name" value="CASP/CASPL"/>
</dbReference>
<dbReference type="InterPro" id="IPR006702">
    <property type="entry name" value="CASP_dom"/>
</dbReference>
<dbReference type="NCBIfam" id="TIGR01569">
    <property type="entry name" value="A_tha_TIGR01569"/>
    <property type="match status" value="1"/>
</dbReference>
<dbReference type="PANTHER" id="PTHR33573:SF30">
    <property type="entry name" value="CASP-LIKE PROTEIN 2C1-RELATED"/>
    <property type="match status" value="1"/>
</dbReference>
<dbReference type="PANTHER" id="PTHR33573">
    <property type="entry name" value="CASP-LIKE PROTEIN 4A4"/>
    <property type="match status" value="1"/>
</dbReference>
<dbReference type="Pfam" id="PF04535">
    <property type="entry name" value="CASP_dom"/>
    <property type="match status" value="1"/>
</dbReference>
<evidence type="ECO:0000250" key="1"/>
<evidence type="ECO:0000255" key="2"/>
<evidence type="ECO:0000256" key="3">
    <source>
        <dbReference type="SAM" id="MobiDB-lite"/>
    </source>
</evidence>
<evidence type="ECO:0000269" key="4">
    <source>
    </source>
</evidence>
<evidence type="ECO:0000305" key="5"/>
<comment type="subunit">
    <text evidence="1">Homodimer and heterodimers.</text>
</comment>
<comment type="subcellular location">
    <subcellularLocation>
        <location evidence="4">Cell membrane</location>
        <topology evidence="4">Multi-pass membrane protein</topology>
    </subcellularLocation>
</comment>
<comment type="similarity">
    <text evidence="5">Belongs to the Casparian strip membrane proteins (CASP) family.</text>
</comment>
<accession>Q9FFT2</accession>
<gene>
    <name type="ordered locus">At5g54980</name>
    <name type="ORF">MBG8.25</name>
</gene>